<name>Y1309_HAEIN</name>
<feature type="chain" id="PRO_0000189418" description="Uncharacterized ferredoxin-like protein HI_1309">
    <location>
        <begin position="1"/>
        <end position="82"/>
    </location>
</feature>
<feature type="domain" description="2Fe-2S ferredoxin-type" evidence="1">
    <location>
        <begin position="1"/>
        <end position="82"/>
    </location>
</feature>
<feature type="binding site" evidence="1">
    <location>
        <position position="35"/>
    </location>
    <ligand>
        <name>[2Fe-2S] cluster</name>
        <dbReference type="ChEBI" id="CHEBI:190135"/>
    </ligand>
</feature>
<feature type="binding site" evidence="1">
    <location>
        <position position="40"/>
    </location>
    <ligand>
        <name>[2Fe-2S] cluster</name>
        <dbReference type="ChEBI" id="CHEBI:190135"/>
    </ligand>
</feature>
<feature type="binding site" evidence="1">
    <location>
        <position position="43"/>
    </location>
    <ligand>
        <name>[2Fe-2S] cluster</name>
        <dbReference type="ChEBI" id="CHEBI:190135"/>
    </ligand>
</feature>
<feature type="binding site" evidence="1">
    <location>
        <position position="72"/>
    </location>
    <ligand>
        <name>[2Fe-2S] cluster</name>
        <dbReference type="ChEBI" id="CHEBI:190135"/>
    </ligand>
</feature>
<sequence length="82" mass="9588">MKIHLIRHNTTLEFNNETSLLDHLEKNNIHHEYQCRSGYCGSCRVKIKKGKVSYKEMPLAFIQPDEILLCCCHVESDIEIDL</sequence>
<reference key="1">
    <citation type="journal article" date="1995" name="Science">
        <title>Whole-genome random sequencing and assembly of Haemophilus influenzae Rd.</title>
        <authorList>
            <person name="Fleischmann R.D."/>
            <person name="Adams M.D."/>
            <person name="White O."/>
            <person name="Clayton R.A."/>
            <person name="Kirkness E.F."/>
            <person name="Kerlavage A.R."/>
            <person name="Bult C.J."/>
            <person name="Tomb J.-F."/>
            <person name="Dougherty B.A."/>
            <person name="Merrick J.M."/>
            <person name="McKenney K."/>
            <person name="Sutton G.G."/>
            <person name="FitzHugh W."/>
            <person name="Fields C.A."/>
            <person name="Gocayne J.D."/>
            <person name="Scott J.D."/>
            <person name="Shirley R."/>
            <person name="Liu L.-I."/>
            <person name="Glodek A."/>
            <person name="Kelley J.M."/>
            <person name="Weidman J.F."/>
            <person name="Phillips C.A."/>
            <person name="Spriggs T."/>
            <person name="Hedblom E."/>
            <person name="Cotton M.D."/>
            <person name="Utterback T.R."/>
            <person name="Hanna M.C."/>
            <person name="Nguyen D.T."/>
            <person name="Saudek D.M."/>
            <person name="Brandon R.C."/>
            <person name="Fine L.D."/>
            <person name="Fritchman J.L."/>
            <person name="Fuhrmann J.L."/>
            <person name="Geoghagen N.S.M."/>
            <person name="Gnehm C.L."/>
            <person name="McDonald L.A."/>
            <person name="Small K.V."/>
            <person name="Fraser C.M."/>
            <person name="Smith H.O."/>
            <person name="Venter J.C."/>
        </authorList>
    </citation>
    <scope>NUCLEOTIDE SEQUENCE [LARGE SCALE GENOMIC DNA]</scope>
    <source>
        <strain>ATCC 51907 / DSM 11121 / KW20 / Rd</strain>
    </source>
</reference>
<evidence type="ECO:0000255" key="1">
    <source>
        <dbReference type="PROSITE-ProRule" id="PRU00465"/>
    </source>
</evidence>
<evidence type="ECO:0000305" key="2"/>
<dbReference type="EMBL" id="L42023">
    <property type="protein sequence ID" value="AAC22956.1"/>
    <property type="molecule type" value="Genomic_DNA"/>
</dbReference>
<dbReference type="PIR" id="G64170">
    <property type="entry name" value="G64170"/>
</dbReference>
<dbReference type="RefSeq" id="NP_439460.1">
    <property type="nucleotide sequence ID" value="NC_000907.1"/>
</dbReference>
<dbReference type="SMR" id="P45154"/>
<dbReference type="STRING" id="71421.HI_1309"/>
<dbReference type="EnsemblBacteria" id="AAC22956">
    <property type="protein sequence ID" value="AAC22956"/>
    <property type="gene ID" value="HI_1309"/>
</dbReference>
<dbReference type="KEGG" id="hin:HI_1309"/>
<dbReference type="PATRIC" id="fig|71421.8.peg.1361"/>
<dbReference type="eggNOG" id="COG0633">
    <property type="taxonomic scope" value="Bacteria"/>
</dbReference>
<dbReference type="HOGENOM" id="CLU_082632_6_1_6"/>
<dbReference type="OrthoDB" id="9806195at2"/>
<dbReference type="PhylomeDB" id="P45154"/>
<dbReference type="BioCyc" id="HINF71421:G1GJ1-1334-MONOMER"/>
<dbReference type="Proteomes" id="UP000000579">
    <property type="component" value="Chromosome"/>
</dbReference>
<dbReference type="GO" id="GO:0051537">
    <property type="term" value="F:2 iron, 2 sulfur cluster binding"/>
    <property type="evidence" value="ECO:0007669"/>
    <property type="project" value="UniProtKB-KW"/>
</dbReference>
<dbReference type="GO" id="GO:0046872">
    <property type="term" value="F:metal ion binding"/>
    <property type="evidence" value="ECO:0007669"/>
    <property type="project" value="UniProtKB-KW"/>
</dbReference>
<dbReference type="CDD" id="cd00207">
    <property type="entry name" value="fer2"/>
    <property type="match status" value="1"/>
</dbReference>
<dbReference type="Gene3D" id="3.10.20.30">
    <property type="match status" value="1"/>
</dbReference>
<dbReference type="InterPro" id="IPR036010">
    <property type="entry name" value="2Fe-2S_ferredoxin-like_sf"/>
</dbReference>
<dbReference type="InterPro" id="IPR001041">
    <property type="entry name" value="2Fe-2S_ferredoxin-type"/>
</dbReference>
<dbReference type="InterPro" id="IPR006058">
    <property type="entry name" value="2Fe2S_fd_BS"/>
</dbReference>
<dbReference type="InterPro" id="IPR012675">
    <property type="entry name" value="Beta-grasp_dom_sf"/>
</dbReference>
<dbReference type="NCBIfam" id="NF007985">
    <property type="entry name" value="PRK10713.1"/>
    <property type="match status" value="1"/>
</dbReference>
<dbReference type="Pfam" id="PF00111">
    <property type="entry name" value="Fer2"/>
    <property type="match status" value="1"/>
</dbReference>
<dbReference type="SUPFAM" id="SSF54292">
    <property type="entry name" value="2Fe-2S ferredoxin-like"/>
    <property type="match status" value="1"/>
</dbReference>
<dbReference type="PROSITE" id="PS00197">
    <property type="entry name" value="2FE2S_FER_1"/>
    <property type="match status" value="1"/>
</dbReference>
<dbReference type="PROSITE" id="PS51085">
    <property type="entry name" value="2FE2S_FER_2"/>
    <property type="match status" value="1"/>
</dbReference>
<organism>
    <name type="scientific">Haemophilus influenzae (strain ATCC 51907 / DSM 11121 / KW20 / Rd)</name>
    <dbReference type="NCBI Taxonomy" id="71421"/>
    <lineage>
        <taxon>Bacteria</taxon>
        <taxon>Pseudomonadati</taxon>
        <taxon>Pseudomonadota</taxon>
        <taxon>Gammaproteobacteria</taxon>
        <taxon>Pasteurellales</taxon>
        <taxon>Pasteurellaceae</taxon>
        <taxon>Haemophilus</taxon>
    </lineage>
</organism>
<comment type="cofactor">
    <cofactor evidence="2">
        <name>[2Fe-2S] cluster</name>
        <dbReference type="ChEBI" id="CHEBI:190135"/>
    </cofactor>
    <text evidence="2">Binds 1 [2Fe-2S] cluster.</text>
</comment>
<keyword id="KW-0001">2Fe-2S</keyword>
<keyword id="KW-0249">Electron transport</keyword>
<keyword id="KW-0408">Iron</keyword>
<keyword id="KW-0411">Iron-sulfur</keyword>
<keyword id="KW-0479">Metal-binding</keyword>
<keyword id="KW-1185">Reference proteome</keyword>
<keyword id="KW-0813">Transport</keyword>
<accession>P45154</accession>
<protein>
    <recommendedName>
        <fullName>Uncharacterized ferredoxin-like protein HI_1309</fullName>
    </recommendedName>
</protein>
<gene>
    <name type="ordered locus">HI_1309</name>
</gene>
<proteinExistence type="predicted"/>